<dbReference type="EC" id="3.1.26.5" evidence="1"/>
<dbReference type="EMBL" id="BX571856">
    <property type="protein sequence ID" value="CAG41771.1"/>
    <property type="molecule type" value="Genomic_DNA"/>
</dbReference>
<dbReference type="SMR" id="Q6GD91"/>
<dbReference type="IntAct" id="Q6GD91">
    <property type="interactions" value="1"/>
</dbReference>
<dbReference type="KEGG" id="sar:SAR2799"/>
<dbReference type="HOGENOM" id="CLU_117179_9_1_9"/>
<dbReference type="Proteomes" id="UP000000596">
    <property type="component" value="Chromosome"/>
</dbReference>
<dbReference type="GO" id="GO:0030677">
    <property type="term" value="C:ribonuclease P complex"/>
    <property type="evidence" value="ECO:0007669"/>
    <property type="project" value="TreeGrafter"/>
</dbReference>
<dbReference type="GO" id="GO:0042781">
    <property type="term" value="F:3'-tRNA processing endoribonuclease activity"/>
    <property type="evidence" value="ECO:0007669"/>
    <property type="project" value="TreeGrafter"/>
</dbReference>
<dbReference type="GO" id="GO:0004526">
    <property type="term" value="F:ribonuclease P activity"/>
    <property type="evidence" value="ECO:0007669"/>
    <property type="project" value="UniProtKB-UniRule"/>
</dbReference>
<dbReference type="GO" id="GO:0000049">
    <property type="term" value="F:tRNA binding"/>
    <property type="evidence" value="ECO:0007669"/>
    <property type="project" value="UniProtKB-UniRule"/>
</dbReference>
<dbReference type="GO" id="GO:0001682">
    <property type="term" value="P:tRNA 5'-leader removal"/>
    <property type="evidence" value="ECO:0007669"/>
    <property type="project" value="UniProtKB-UniRule"/>
</dbReference>
<dbReference type="FunFam" id="3.30.230.10:FF:000021">
    <property type="entry name" value="Ribonuclease P protein component"/>
    <property type="match status" value="1"/>
</dbReference>
<dbReference type="Gene3D" id="3.30.230.10">
    <property type="match status" value="1"/>
</dbReference>
<dbReference type="HAMAP" id="MF_00227">
    <property type="entry name" value="RNase_P"/>
    <property type="match status" value="1"/>
</dbReference>
<dbReference type="InterPro" id="IPR020568">
    <property type="entry name" value="Ribosomal_Su5_D2-typ_SF"/>
</dbReference>
<dbReference type="InterPro" id="IPR014721">
    <property type="entry name" value="Ribsml_uS5_D2-typ_fold_subgr"/>
</dbReference>
<dbReference type="InterPro" id="IPR000100">
    <property type="entry name" value="RNase_P"/>
</dbReference>
<dbReference type="InterPro" id="IPR020539">
    <property type="entry name" value="RNase_P_CS"/>
</dbReference>
<dbReference type="NCBIfam" id="TIGR00188">
    <property type="entry name" value="rnpA"/>
    <property type="match status" value="1"/>
</dbReference>
<dbReference type="PANTHER" id="PTHR33992">
    <property type="entry name" value="RIBONUCLEASE P PROTEIN COMPONENT"/>
    <property type="match status" value="1"/>
</dbReference>
<dbReference type="PANTHER" id="PTHR33992:SF1">
    <property type="entry name" value="RIBONUCLEASE P PROTEIN COMPONENT"/>
    <property type="match status" value="1"/>
</dbReference>
<dbReference type="Pfam" id="PF00825">
    <property type="entry name" value="Ribonuclease_P"/>
    <property type="match status" value="1"/>
</dbReference>
<dbReference type="SUPFAM" id="SSF54211">
    <property type="entry name" value="Ribosomal protein S5 domain 2-like"/>
    <property type="match status" value="1"/>
</dbReference>
<dbReference type="PROSITE" id="PS00648">
    <property type="entry name" value="RIBONUCLEASE_P"/>
    <property type="match status" value="1"/>
</dbReference>
<accession>Q6GD91</accession>
<sequence>MEKAYRIKKNADFQRIYKKGHSVANRQFVVYTCNNKEIDHFRLGISVSKKLGNAVLRNKIKRAIRENFKVHKSHILAKDIIVIARQPAKDMTTLQIQNSLEHVLKIAKVFNKKIK</sequence>
<proteinExistence type="inferred from homology"/>
<name>RNPA_STAAR</name>
<comment type="function">
    <text evidence="1">RNaseP catalyzes the removal of the 5'-leader sequence from pre-tRNA to produce the mature 5'-terminus. It can also cleave other RNA substrates such as 4.5S RNA. The protein component plays an auxiliary but essential role in vivo by binding to the 5'-leader sequence and broadening the substrate specificity of the ribozyme.</text>
</comment>
<comment type="catalytic activity">
    <reaction evidence="1">
        <text>Endonucleolytic cleavage of RNA, removing 5'-extranucleotides from tRNA precursor.</text>
        <dbReference type="EC" id="3.1.26.5"/>
    </reaction>
</comment>
<comment type="subunit">
    <text evidence="1">Consists of a catalytic RNA component (M1 or rnpB) and a protein subunit.</text>
</comment>
<comment type="similarity">
    <text evidence="1">Belongs to the RnpA family.</text>
</comment>
<evidence type="ECO:0000255" key="1">
    <source>
        <dbReference type="HAMAP-Rule" id="MF_00227"/>
    </source>
</evidence>
<feature type="chain" id="PRO_0000198528" description="Ribonuclease P protein component">
    <location>
        <begin position="1"/>
        <end position="115"/>
    </location>
</feature>
<organism>
    <name type="scientific">Staphylococcus aureus (strain MRSA252)</name>
    <dbReference type="NCBI Taxonomy" id="282458"/>
    <lineage>
        <taxon>Bacteria</taxon>
        <taxon>Bacillati</taxon>
        <taxon>Bacillota</taxon>
        <taxon>Bacilli</taxon>
        <taxon>Bacillales</taxon>
        <taxon>Staphylococcaceae</taxon>
        <taxon>Staphylococcus</taxon>
    </lineage>
</organism>
<protein>
    <recommendedName>
        <fullName evidence="1">Ribonuclease P protein component</fullName>
        <shortName evidence="1">RNase P protein</shortName>
        <shortName evidence="1">RNaseP protein</shortName>
        <ecNumber evidence="1">3.1.26.5</ecNumber>
    </recommendedName>
    <alternativeName>
        <fullName evidence="1">Protein C5</fullName>
    </alternativeName>
</protein>
<gene>
    <name evidence="1" type="primary">rnpA</name>
    <name type="ordered locus">SAR2799</name>
</gene>
<reference key="1">
    <citation type="journal article" date="2004" name="Proc. Natl. Acad. Sci. U.S.A.">
        <title>Complete genomes of two clinical Staphylococcus aureus strains: evidence for the rapid evolution of virulence and drug resistance.</title>
        <authorList>
            <person name="Holden M.T.G."/>
            <person name="Feil E.J."/>
            <person name="Lindsay J.A."/>
            <person name="Peacock S.J."/>
            <person name="Day N.P.J."/>
            <person name="Enright M.C."/>
            <person name="Foster T.J."/>
            <person name="Moore C.E."/>
            <person name="Hurst L."/>
            <person name="Atkin R."/>
            <person name="Barron A."/>
            <person name="Bason N."/>
            <person name="Bentley S.D."/>
            <person name="Chillingworth C."/>
            <person name="Chillingworth T."/>
            <person name="Churcher C."/>
            <person name="Clark L."/>
            <person name="Corton C."/>
            <person name="Cronin A."/>
            <person name="Doggett J."/>
            <person name="Dowd L."/>
            <person name="Feltwell T."/>
            <person name="Hance Z."/>
            <person name="Harris B."/>
            <person name="Hauser H."/>
            <person name="Holroyd S."/>
            <person name="Jagels K."/>
            <person name="James K.D."/>
            <person name="Lennard N."/>
            <person name="Line A."/>
            <person name="Mayes R."/>
            <person name="Moule S."/>
            <person name="Mungall K."/>
            <person name="Ormond D."/>
            <person name="Quail M.A."/>
            <person name="Rabbinowitsch E."/>
            <person name="Rutherford K.M."/>
            <person name="Sanders M."/>
            <person name="Sharp S."/>
            <person name="Simmonds M."/>
            <person name="Stevens K."/>
            <person name="Whitehead S."/>
            <person name="Barrell B.G."/>
            <person name="Spratt B.G."/>
            <person name="Parkhill J."/>
        </authorList>
    </citation>
    <scope>NUCLEOTIDE SEQUENCE [LARGE SCALE GENOMIC DNA]</scope>
    <source>
        <strain>MRSA252</strain>
    </source>
</reference>
<keyword id="KW-0255">Endonuclease</keyword>
<keyword id="KW-0378">Hydrolase</keyword>
<keyword id="KW-0540">Nuclease</keyword>
<keyword id="KW-0694">RNA-binding</keyword>
<keyword id="KW-0819">tRNA processing</keyword>